<keyword id="KW-0687">Ribonucleoprotein</keyword>
<keyword id="KW-0689">Ribosomal protein</keyword>
<keyword id="KW-0694">RNA-binding</keyword>
<keyword id="KW-0699">rRNA-binding</keyword>
<keyword id="KW-0820">tRNA-binding</keyword>
<protein>
    <recommendedName>
        <fullName evidence="1">Small ribosomal subunit protein uS7</fullName>
    </recommendedName>
    <alternativeName>
        <fullName evidence="2">30S ribosomal protein S7</fullName>
    </alternativeName>
</protein>
<sequence length="156" mass="17604">MPRRRVIGQRKILPDPKFGSELLAKFVNILMVDGKKSTAESIVYSALETLAQRSGKSELEAFEVALENVRPTVEVKSRRVGGSTYQVPVEVRPVRRNALAMRWIVEAARKRGDKSMALRLANELSDAAENKGTAVKKREDVHRMAEANKAFAHYRW</sequence>
<gene>
    <name evidence="1" type="primary">rpsG</name>
    <name type="ordered locus">ECUMN_3801</name>
</gene>
<organism>
    <name type="scientific">Escherichia coli O17:K52:H18 (strain UMN026 / ExPEC)</name>
    <dbReference type="NCBI Taxonomy" id="585056"/>
    <lineage>
        <taxon>Bacteria</taxon>
        <taxon>Pseudomonadati</taxon>
        <taxon>Pseudomonadota</taxon>
        <taxon>Gammaproteobacteria</taxon>
        <taxon>Enterobacterales</taxon>
        <taxon>Enterobacteriaceae</taxon>
        <taxon>Escherichia</taxon>
    </lineage>
</organism>
<dbReference type="EMBL" id="CU928163">
    <property type="protein sequence ID" value="CAR14949.1"/>
    <property type="molecule type" value="Genomic_DNA"/>
</dbReference>
<dbReference type="RefSeq" id="WP_001138043.1">
    <property type="nucleotide sequence ID" value="NC_011751.1"/>
</dbReference>
<dbReference type="RefSeq" id="YP_002414454.1">
    <property type="nucleotide sequence ID" value="NC_011751.1"/>
</dbReference>
<dbReference type="SMR" id="B7NDU9"/>
<dbReference type="STRING" id="585056.ECUMN_3801"/>
<dbReference type="GeneID" id="93778657"/>
<dbReference type="KEGG" id="eum:ECUMN_3801"/>
<dbReference type="PATRIC" id="fig|585056.7.peg.3975"/>
<dbReference type="HOGENOM" id="CLU_072226_1_1_6"/>
<dbReference type="Proteomes" id="UP000007097">
    <property type="component" value="Chromosome"/>
</dbReference>
<dbReference type="GO" id="GO:0015935">
    <property type="term" value="C:small ribosomal subunit"/>
    <property type="evidence" value="ECO:0007669"/>
    <property type="project" value="InterPro"/>
</dbReference>
<dbReference type="GO" id="GO:0019843">
    <property type="term" value="F:rRNA binding"/>
    <property type="evidence" value="ECO:0007669"/>
    <property type="project" value="UniProtKB-UniRule"/>
</dbReference>
<dbReference type="GO" id="GO:0003735">
    <property type="term" value="F:structural constituent of ribosome"/>
    <property type="evidence" value="ECO:0007669"/>
    <property type="project" value="InterPro"/>
</dbReference>
<dbReference type="GO" id="GO:0000049">
    <property type="term" value="F:tRNA binding"/>
    <property type="evidence" value="ECO:0007669"/>
    <property type="project" value="UniProtKB-UniRule"/>
</dbReference>
<dbReference type="GO" id="GO:0006412">
    <property type="term" value="P:translation"/>
    <property type="evidence" value="ECO:0007669"/>
    <property type="project" value="UniProtKB-UniRule"/>
</dbReference>
<dbReference type="CDD" id="cd14869">
    <property type="entry name" value="uS7_Bacteria"/>
    <property type="match status" value="1"/>
</dbReference>
<dbReference type="FunFam" id="1.10.455.10:FF:000001">
    <property type="entry name" value="30S ribosomal protein S7"/>
    <property type="match status" value="1"/>
</dbReference>
<dbReference type="Gene3D" id="1.10.455.10">
    <property type="entry name" value="Ribosomal protein S7 domain"/>
    <property type="match status" value="1"/>
</dbReference>
<dbReference type="HAMAP" id="MF_00480_B">
    <property type="entry name" value="Ribosomal_uS7_B"/>
    <property type="match status" value="1"/>
</dbReference>
<dbReference type="InterPro" id="IPR000235">
    <property type="entry name" value="Ribosomal_uS7"/>
</dbReference>
<dbReference type="InterPro" id="IPR005717">
    <property type="entry name" value="Ribosomal_uS7_bac/org-type"/>
</dbReference>
<dbReference type="InterPro" id="IPR020606">
    <property type="entry name" value="Ribosomal_uS7_CS"/>
</dbReference>
<dbReference type="InterPro" id="IPR023798">
    <property type="entry name" value="Ribosomal_uS7_dom"/>
</dbReference>
<dbReference type="InterPro" id="IPR036823">
    <property type="entry name" value="Ribosomal_uS7_dom_sf"/>
</dbReference>
<dbReference type="NCBIfam" id="TIGR01029">
    <property type="entry name" value="rpsG_bact"/>
    <property type="match status" value="1"/>
</dbReference>
<dbReference type="PANTHER" id="PTHR11205">
    <property type="entry name" value="RIBOSOMAL PROTEIN S7"/>
    <property type="match status" value="1"/>
</dbReference>
<dbReference type="Pfam" id="PF00177">
    <property type="entry name" value="Ribosomal_S7"/>
    <property type="match status" value="1"/>
</dbReference>
<dbReference type="PIRSF" id="PIRSF002122">
    <property type="entry name" value="RPS7p_RPS7a_RPS5e_RPS7o"/>
    <property type="match status" value="1"/>
</dbReference>
<dbReference type="SUPFAM" id="SSF47973">
    <property type="entry name" value="Ribosomal protein S7"/>
    <property type="match status" value="1"/>
</dbReference>
<dbReference type="PROSITE" id="PS00052">
    <property type="entry name" value="RIBOSOMAL_S7"/>
    <property type="match status" value="1"/>
</dbReference>
<evidence type="ECO:0000255" key="1">
    <source>
        <dbReference type="HAMAP-Rule" id="MF_00480"/>
    </source>
</evidence>
<evidence type="ECO:0000305" key="2"/>
<feature type="chain" id="PRO_1000125941" description="Small ribosomal subunit protein uS7">
    <location>
        <begin position="1"/>
        <end position="156"/>
    </location>
</feature>
<name>RS7_ECOLU</name>
<comment type="function">
    <text evidence="1">One of the primary rRNA binding proteins, it binds directly to 16S rRNA where it nucleates assembly of the head domain of the 30S subunit. Is located at the subunit interface close to the decoding center, probably blocks exit of the E-site tRNA.</text>
</comment>
<comment type="subunit">
    <text evidence="1">Part of the 30S ribosomal subunit. Contacts proteins S9 and S11.</text>
</comment>
<comment type="similarity">
    <text evidence="1">Belongs to the universal ribosomal protein uS7 family.</text>
</comment>
<reference key="1">
    <citation type="journal article" date="2009" name="PLoS Genet.">
        <title>Organised genome dynamics in the Escherichia coli species results in highly diverse adaptive paths.</title>
        <authorList>
            <person name="Touchon M."/>
            <person name="Hoede C."/>
            <person name="Tenaillon O."/>
            <person name="Barbe V."/>
            <person name="Baeriswyl S."/>
            <person name="Bidet P."/>
            <person name="Bingen E."/>
            <person name="Bonacorsi S."/>
            <person name="Bouchier C."/>
            <person name="Bouvet O."/>
            <person name="Calteau A."/>
            <person name="Chiapello H."/>
            <person name="Clermont O."/>
            <person name="Cruveiller S."/>
            <person name="Danchin A."/>
            <person name="Diard M."/>
            <person name="Dossat C."/>
            <person name="Karoui M.E."/>
            <person name="Frapy E."/>
            <person name="Garry L."/>
            <person name="Ghigo J.M."/>
            <person name="Gilles A.M."/>
            <person name="Johnson J."/>
            <person name="Le Bouguenec C."/>
            <person name="Lescat M."/>
            <person name="Mangenot S."/>
            <person name="Martinez-Jehanne V."/>
            <person name="Matic I."/>
            <person name="Nassif X."/>
            <person name="Oztas S."/>
            <person name="Petit M.A."/>
            <person name="Pichon C."/>
            <person name="Rouy Z."/>
            <person name="Ruf C.S."/>
            <person name="Schneider D."/>
            <person name="Tourret J."/>
            <person name="Vacherie B."/>
            <person name="Vallenet D."/>
            <person name="Medigue C."/>
            <person name="Rocha E.P.C."/>
            <person name="Denamur E."/>
        </authorList>
    </citation>
    <scope>NUCLEOTIDE SEQUENCE [LARGE SCALE GENOMIC DNA]</scope>
    <source>
        <strain>UMN026 / ExPEC</strain>
    </source>
</reference>
<proteinExistence type="inferred from homology"/>
<accession>B7NDU9</accession>